<comment type="function">
    <text evidence="1">This is one of the proteins that binds to the 5S RNA in the ribosome where it forms part of the central protuberance.</text>
</comment>
<comment type="subunit">
    <text evidence="1">Part of the 50S ribosomal subunit; part of the 5S rRNA/L5/L18/L25 subcomplex. Contacts the 5S rRNA. Binds to the 5S rRNA independently of L5 and L18.</text>
</comment>
<comment type="similarity">
    <text evidence="1">Belongs to the bacterial ribosomal protein bL25 family. CTC subfamily.</text>
</comment>
<dbReference type="EMBL" id="CP001055">
    <property type="protein sequence ID" value="ACC98841.1"/>
    <property type="molecule type" value="Genomic_DNA"/>
</dbReference>
<dbReference type="RefSeq" id="WP_012415456.1">
    <property type="nucleotide sequence ID" value="NC_010644.1"/>
</dbReference>
<dbReference type="SMR" id="B2KE95"/>
<dbReference type="STRING" id="445932.Emin_1291"/>
<dbReference type="KEGG" id="emi:Emin_1291"/>
<dbReference type="HOGENOM" id="CLU_075939_2_0_0"/>
<dbReference type="OrthoDB" id="9790002at2"/>
<dbReference type="Proteomes" id="UP000001029">
    <property type="component" value="Chromosome"/>
</dbReference>
<dbReference type="GO" id="GO:0022625">
    <property type="term" value="C:cytosolic large ribosomal subunit"/>
    <property type="evidence" value="ECO:0007669"/>
    <property type="project" value="TreeGrafter"/>
</dbReference>
<dbReference type="GO" id="GO:0008097">
    <property type="term" value="F:5S rRNA binding"/>
    <property type="evidence" value="ECO:0007669"/>
    <property type="project" value="InterPro"/>
</dbReference>
<dbReference type="GO" id="GO:0003735">
    <property type="term" value="F:structural constituent of ribosome"/>
    <property type="evidence" value="ECO:0007669"/>
    <property type="project" value="InterPro"/>
</dbReference>
<dbReference type="GO" id="GO:0006412">
    <property type="term" value="P:translation"/>
    <property type="evidence" value="ECO:0007669"/>
    <property type="project" value="UniProtKB-UniRule"/>
</dbReference>
<dbReference type="CDD" id="cd00495">
    <property type="entry name" value="Ribosomal_L25_TL5_CTC"/>
    <property type="match status" value="1"/>
</dbReference>
<dbReference type="Gene3D" id="2.170.120.20">
    <property type="entry name" value="Ribosomal protein L25, beta domain"/>
    <property type="match status" value="1"/>
</dbReference>
<dbReference type="Gene3D" id="2.40.240.10">
    <property type="entry name" value="Ribosomal Protein L25, Chain P"/>
    <property type="match status" value="1"/>
</dbReference>
<dbReference type="HAMAP" id="MF_01334">
    <property type="entry name" value="Ribosomal_bL25_CTC"/>
    <property type="match status" value="1"/>
</dbReference>
<dbReference type="InterPro" id="IPR020056">
    <property type="entry name" value="Rbsml_bL25/Gln-tRNA_synth_N"/>
</dbReference>
<dbReference type="InterPro" id="IPR011035">
    <property type="entry name" value="Ribosomal_bL25/Gln-tRNA_synth"/>
</dbReference>
<dbReference type="InterPro" id="IPR020057">
    <property type="entry name" value="Ribosomal_bL25_b-dom"/>
</dbReference>
<dbReference type="InterPro" id="IPR037121">
    <property type="entry name" value="Ribosomal_bL25_C"/>
</dbReference>
<dbReference type="InterPro" id="IPR001021">
    <property type="entry name" value="Ribosomal_bL25_long"/>
</dbReference>
<dbReference type="InterPro" id="IPR029751">
    <property type="entry name" value="Ribosomal_L25_dom"/>
</dbReference>
<dbReference type="InterPro" id="IPR020930">
    <property type="entry name" value="Ribosomal_uL5_bac-type"/>
</dbReference>
<dbReference type="NCBIfam" id="TIGR00731">
    <property type="entry name" value="bL25_bact_ctc"/>
    <property type="match status" value="1"/>
</dbReference>
<dbReference type="PANTHER" id="PTHR33284">
    <property type="entry name" value="RIBOSOMAL PROTEIN L25/GLN-TRNA SYNTHETASE, ANTI-CODON-BINDING DOMAIN-CONTAINING PROTEIN"/>
    <property type="match status" value="1"/>
</dbReference>
<dbReference type="PANTHER" id="PTHR33284:SF1">
    <property type="entry name" value="RIBOSOMAL PROTEIN L25_GLN-TRNA SYNTHETASE, ANTI-CODON-BINDING DOMAIN-CONTAINING PROTEIN"/>
    <property type="match status" value="1"/>
</dbReference>
<dbReference type="Pfam" id="PF01386">
    <property type="entry name" value="Ribosomal_L25p"/>
    <property type="match status" value="1"/>
</dbReference>
<dbReference type="Pfam" id="PF14693">
    <property type="entry name" value="Ribosomal_TL5_C"/>
    <property type="match status" value="1"/>
</dbReference>
<dbReference type="SUPFAM" id="SSF50715">
    <property type="entry name" value="Ribosomal protein L25-like"/>
    <property type="match status" value="1"/>
</dbReference>
<reference key="1">
    <citation type="journal article" date="2009" name="Appl. Environ. Microbiol.">
        <title>Genomic analysis of 'Elusimicrobium minutum,' the first cultivated representative of the phylum 'Elusimicrobia' (formerly termite group 1).</title>
        <authorList>
            <person name="Herlemann D.P.R."/>
            <person name="Geissinger O."/>
            <person name="Ikeda-Ohtsubo W."/>
            <person name="Kunin V."/>
            <person name="Sun H."/>
            <person name="Lapidus A."/>
            <person name="Hugenholtz P."/>
            <person name="Brune A."/>
        </authorList>
    </citation>
    <scope>NUCLEOTIDE SEQUENCE [LARGE SCALE GENOMIC DNA]</scope>
    <source>
        <strain>Pei191</strain>
    </source>
</reference>
<proteinExistence type="inferred from homology"/>
<feature type="chain" id="PRO_1000166171" description="Large ribosomal subunit protein bL25">
    <location>
        <begin position="1"/>
        <end position="219"/>
    </location>
</feature>
<feature type="region of interest" description="Disordered" evidence="2">
    <location>
        <begin position="188"/>
        <end position="219"/>
    </location>
</feature>
<feature type="compositionally biased region" description="Basic and acidic residues" evidence="2">
    <location>
        <begin position="206"/>
        <end position="219"/>
    </location>
</feature>
<name>RL25_ELUMP</name>
<sequence>MEEIKVNVELREKAGVKGVLSAIRAEKKVPAVIYGGQKEPISVSITEKDLKAILKAGSNSVVTLSTPAGKETAIIKEVQYHVVKDTPNHVDFQRISLKEKIDVVVPLKLTGESADVKIYGALINQVLREVAIRALPTAIPHEIAVDISALTIHKAIHISDLSLSKDIEVLGDPERAIVHLMVPREEETVAAPADTAVQPESSSTKGKKDEDGALAKDKK</sequence>
<gene>
    <name evidence="1" type="primary">rplY</name>
    <name evidence="1" type="synonym">ctc</name>
    <name type="ordered locus">Emin_1291</name>
</gene>
<accession>B2KE95</accession>
<evidence type="ECO:0000255" key="1">
    <source>
        <dbReference type="HAMAP-Rule" id="MF_01334"/>
    </source>
</evidence>
<evidence type="ECO:0000256" key="2">
    <source>
        <dbReference type="SAM" id="MobiDB-lite"/>
    </source>
</evidence>
<evidence type="ECO:0000305" key="3"/>
<organism>
    <name type="scientific">Elusimicrobium minutum (strain Pei191)</name>
    <dbReference type="NCBI Taxonomy" id="445932"/>
    <lineage>
        <taxon>Bacteria</taxon>
        <taxon>Pseudomonadati</taxon>
        <taxon>Elusimicrobiota</taxon>
        <taxon>Elusimicrobia</taxon>
        <taxon>Elusimicrobiales</taxon>
        <taxon>Elusimicrobiaceae</taxon>
        <taxon>Elusimicrobium</taxon>
    </lineage>
</organism>
<protein>
    <recommendedName>
        <fullName evidence="1">Large ribosomal subunit protein bL25</fullName>
    </recommendedName>
    <alternativeName>
        <fullName evidence="3">50S ribosomal protein L25</fullName>
    </alternativeName>
    <alternativeName>
        <fullName evidence="1">General stress protein CTC</fullName>
    </alternativeName>
</protein>
<keyword id="KW-1185">Reference proteome</keyword>
<keyword id="KW-0687">Ribonucleoprotein</keyword>
<keyword id="KW-0689">Ribosomal protein</keyword>
<keyword id="KW-0694">RNA-binding</keyword>
<keyword id="KW-0699">rRNA-binding</keyword>